<feature type="chain" id="PRO_0000362660" description="NADH-quinone oxidoreductase subunit A">
    <location>
        <begin position="1"/>
        <end position="118"/>
    </location>
</feature>
<feature type="transmembrane region" description="Helical" evidence="1">
    <location>
        <begin position="8"/>
        <end position="28"/>
    </location>
</feature>
<feature type="transmembrane region" description="Helical" evidence="1">
    <location>
        <begin position="64"/>
        <end position="84"/>
    </location>
</feature>
<feature type="transmembrane region" description="Helical" evidence="1">
    <location>
        <begin position="87"/>
        <end position="107"/>
    </location>
</feature>
<reference key="1">
    <citation type="journal article" date="2011" name="BMC Genomics">
        <title>Complete genome sequence of the filamentous anoxygenic phototrophic bacterium Chloroflexus aurantiacus.</title>
        <authorList>
            <person name="Tang K.H."/>
            <person name="Barry K."/>
            <person name="Chertkov O."/>
            <person name="Dalin E."/>
            <person name="Han C.S."/>
            <person name="Hauser L.J."/>
            <person name="Honchak B.M."/>
            <person name="Karbach L.E."/>
            <person name="Land M.L."/>
            <person name="Lapidus A."/>
            <person name="Larimer F.W."/>
            <person name="Mikhailova N."/>
            <person name="Pitluck S."/>
            <person name="Pierson B.K."/>
            <person name="Blankenship R.E."/>
        </authorList>
    </citation>
    <scope>NUCLEOTIDE SEQUENCE [LARGE SCALE GENOMIC DNA]</scope>
    <source>
        <strain>ATCC 29366 / DSM 635 / J-10-fl</strain>
    </source>
</reference>
<comment type="function">
    <text evidence="1">NDH-1 shuttles electrons from NADH, via FMN and iron-sulfur (Fe-S) centers, to quinones in the respiratory chain. The immediate electron acceptor for the enzyme in this species is believed to be ubiquinone. Couples the redox reaction to proton translocation (for every two electrons transferred, four hydrogen ions are translocated across the cytoplasmic membrane), and thus conserves the redox energy in a proton gradient.</text>
</comment>
<comment type="catalytic activity">
    <reaction evidence="1">
        <text>a quinone + NADH + 5 H(+)(in) = a quinol + NAD(+) + 4 H(+)(out)</text>
        <dbReference type="Rhea" id="RHEA:57888"/>
        <dbReference type="ChEBI" id="CHEBI:15378"/>
        <dbReference type="ChEBI" id="CHEBI:24646"/>
        <dbReference type="ChEBI" id="CHEBI:57540"/>
        <dbReference type="ChEBI" id="CHEBI:57945"/>
        <dbReference type="ChEBI" id="CHEBI:132124"/>
    </reaction>
</comment>
<comment type="subunit">
    <text evidence="1">NDH-1 is composed of 14 different subunits. Subunits NuoA, H, J, K, L, M, N constitute the membrane sector of the complex.</text>
</comment>
<comment type="subcellular location">
    <subcellularLocation>
        <location evidence="1">Cell membrane</location>
        <topology evidence="1">Multi-pass membrane protein</topology>
    </subcellularLocation>
</comment>
<comment type="similarity">
    <text evidence="1">Belongs to the complex I subunit 3 family.</text>
</comment>
<protein>
    <recommendedName>
        <fullName evidence="1">NADH-quinone oxidoreductase subunit A</fullName>
        <ecNumber evidence="1">7.1.1.-</ecNumber>
    </recommendedName>
    <alternativeName>
        <fullName evidence="1">NADH dehydrogenase I subunit A</fullName>
    </alternativeName>
    <alternativeName>
        <fullName evidence="1">NDH-1 subunit A</fullName>
    </alternativeName>
    <alternativeName>
        <fullName evidence="1">NUO1</fullName>
    </alternativeName>
</protein>
<sequence length="118" mass="13358">MLANYALIGIFLVAAISFPLIPLVLAFFLRPKRPTPLKTSTYECGLEAIGDVHVQFKVQYYLYALAFVIFDIEVIFLYPWAVAFNAVGLYGLIAATIFLLMLFAGLLYEWRKGALEWV</sequence>
<name>NUOA_CHLAA</name>
<dbReference type="EC" id="7.1.1.-" evidence="1"/>
<dbReference type="EMBL" id="CP000909">
    <property type="protein sequence ID" value="ABY35202.1"/>
    <property type="molecule type" value="Genomic_DNA"/>
</dbReference>
<dbReference type="RefSeq" id="WP_012257856.1">
    <property type="nucleotide sequence ID" value="NC_010175.1"/>
</dbReference>
<dbReference type="RefSeq" id="YP_001635591.1">
    <property type="nucleotide sequence ID" value="NC_010175.1"/>
</dbReference>
<dbReference type="SMR" id="A9WEE0"/>
<dbReference type="STRING" id="324602.Caur_1987"/>
<dbReference type="EnsemblBacteria" id="ABY35202">
    <property type="protein sequence ID" value="ABY35202"/>
    <property type="gene ID" value="Caur_1987"/>
</dbReference>
<dbReference type="KEGG" id="cau:Caur_1987"/>
<dbReference type="PATRIC" id="fig|324602.8.peg.2256"/>
<dbReference type="eggNOG" id="COG0838">
    <property type="taxonomic scope" value="Bacteria"/>
</dbReference>
<dbReference type="HOGENOM" id="CLU_119549_3_1_0"/>
<dbReference type="InParanoid" id="A9WEE0"/>
<dbReference type="Proteomes" id="UP000002008">
    <property type="component" value="Chromosome"/>
</dbReference>
<dbReference type="GO" id="GO:0030964">
    <property type="term" value="C:NADH dehydrogenase complex"/>
    <property type="evidence" value="ECO:0000318"/>
    <property type="project" value="GO_Central"/>
</dbReference>
<dbReference type="GO" id="GO:0005886">
    <property type="term" value="C:plasma membrane"/>
    <property type="evidence" value="ECO:0007669"/>
    <property type="project" value="UniProtKB-SubCell"/>
</dbReference>
<dbReference type="GO" id="GO:0008137">
    <property type="term" value="F:NADH dehydrogenase (ubiquinone) activity"/>
    <property type="evidence" value="ECO:0000318"/>
    <property type="project" value="GO_Central"/>
</dbReference>
<dbReference type="GO" id="GO:0050136">
    <property type="term" value="F:NADH:ubiquinone reductase (non-electrogenic) activity"/>
    <property type="evidence" value="ECO:0007669"/>
    <property type="project" value="UniProtKB-UniRule"/>
</dbReference>
<dbReference type="GO" id="GO:0048038">
    <property type="term" value="F:quinone binding"/>
    <property type="evidence" value="ECO:0007669"/>
    <property type="project" value="UniProtKB-KW"/>
</dbReference>
<dbReference type="Gene3D" id="1.20.58.1610">
    <property type="entry name" value="NADH:ubiquinone/plastoquinone oxidoreductase, chain 3"/>
    <property type="match status" value="1"/>
</dbReference>
<dbReference type="HAMAP" id="MF_01394">
    <property type="entry name" value="NDH1_NuoA"/>
    <property type="match status" value="1"/>
</dbReference>
<dbReference type="InterPro" id="IPR023043">
    <property type="entry name" value="NAD(P)H_OxRDtase_bac/plastid"/>
</dbReference>
<dbReference type="InterPro" id="IPR000440">
    <property type="entry name" value="NADH_UbQ/plastoQ_OxRdtase_su3"/>
</dbReference>
<dbReference type="InterPro" id="IPR038430">
    <property type="entry name" value="NDAH_ubi_oxred_su3_sf"/>
</dbReference>
<dbReference type="PANTHER" id="PTHR11058">
    <property type="entry name" value="NADH-UBIQUINONE OXIDOREDUCTASE CHAIN 3"/>
    <property type="match status" value="1"/>
</dbReference>
<dbReference type="PANTHER" id="PTHR11058:SF9">
    <property type="entry name" value="NADH-UBIQUINONE OXIDOREDUCTASE CHAIN 3"/>
    <property type="match status" value="1"/>
</dbReference>
<dbReference type="Pfam" id="PF00507">
    <property type="entry name" value="Oxidored_q4"/>
    <property type="match status" value="1"/>
</dbReference>
<accession>A9WEE0</accession>
<keyword id="KW-1003">Cell membrane</keyword>
<keyword id="KW-0472">Membrane</keyword>
<keyword id="KW-0520">NAD</keyword>
<keyword id="KW-0874">Quinone</keyword>
<keyword id="KW-1185">Reference proteome</keyword>
<keyword id="KW-1278">Translocase</keyword>
<keyword id="KW-0812">Transmembrane</keyword>
<keyword id="KW-1133">Transmembrane helix</keyword>
<keyword id="KW-0813">Transport</keyword>
<keyword id="KW-0830">Ubiquinone</keyword>
<proteinExistence type="inferred from homology"/>
<organism>
    <name type="scientific">Chloroflexus aurantiacus (strain ATCC 29366 / DSM 635 / J-10-fl)</name>
    <dbReference type="NCBI Taxonomy" id="324602"/>
    <lineage>
        <taxon>Bacteria</taxon>
        <taxon>Bacillati</taxon>
        <taxon>Chloroflexota</taxon>
        <taxon>Chloroflexia</taxon>
        <taxon>Chloroflexales</taxon>
        <taxon>Chloroflexineae</taxon>
        <taxon>Chloroflexaceae</taxon>
        <taxon>Chloroflexus</taxon>
    </lineage>
</organism>
<gene>
    <name evidence="1" type="primary">nuoA</name>
    <name type="ordered locus">Caur_1987</name>
</gene>
<evidence type="ECO:0000255" key="1">
    <source>
        <dbReference type="HAMAP-Rule" id="MF_01394"/>
    </source>
</evidence>